<comment type="similarity">
    <text evidence="2">Belongs to the bacterial solute-binding protein 1 family. WtpA subfamily.</text>
</comment>
<reference key="1">
    <citation type="submission" date="2007-11" db="EMBL/GenBank/DDBJ databases">
        <title>Complete sequence of Petroga mobilis SJ95.</title>
        <authorList>
            <consortium name="US DOE Joint Genome Institute"/>
            <person name="Copeland A."/>
            <person name="Lucas S."/>
            <person name="Lapidus A."/>
            <person name="Barry K."/>
            <person name="Glavina del Rio T."/>
            <person name="Dalin E."/>
            <person name="Tice H."/>
            <person name="Pitluck S."/>
            <person name="Meincke L."/>
            <person name="Brettin T."/>
            <person name="Bruce D."/>
            <person name="Detter J.C."/>
            <person name="Han C."/>
            <person name="Kuske C.R."/>
            <person name="Schmutz J."/>
            <person name="Larimer F."/>
            <person name="Land M."/>
            <person name="Hauser L."/>
            <person name="Kyrpides N."/>
            <person name="Mikhailova N."/>
            <person name="Noll K."/>
            <person name="Richardson P."/>
        </authorList>
    </citation>
    <scope>NUCLEOTIDE SEQUENCE [LARGE SCALE GENOMIC DNA]</scope>
    <source>
        <strain>DSM 10674 / SJ95</strain>
    </source>
</reference>
<keyword id="KW-0732">Signal</keyword>
<evidence type="ECO:0000255" key="1"/>
<evidence type="ECO:0000305" key="2"/>
<gene>
    <name type="ordered locus">Pmob_0379</name>
</gene>
<accession>A9BF57</accession>
<name>Y379_PETMO</name>
<sequence length="321" mass="36305">MKSIYKYTFMLFVFLFGTLMMAEDITGEIVVFHAGSLSVPFAQIEKAFESQYPGTDVIREAAGSREAVRKVTDLGREADVIGSADYTVIENLMIPEYTEWYINFANNEMVIMYTEDSRYKDEINSDNWYEILLRPDVEYGHSDPNADPCGYRSQIVWKLAEKYYKVDSLYKKLADNCPPKNVRPKETDLIALLEAGELDYIFIYKSVALQHRMPYVELPEQINLKSTKYADFYATASFDVTGKEPGEMITQIGQPMVYALTIPNNAPNLQGAIAFIKFVIGPQGRAIMEENGQPSINPPEGVNIEKAPQELQDFLKGGAND</sequence>
<organism>
    <name type="scientific">Petrotoga mobilis (strain DSM 10674 / SJ95)</name>
    <dbReference type="NCBI Taxonomy" id="403833"/>
    <lineage>
        <taxon>Bacteria</taxon>
        <taxon>Thermotogati</taxon>
        <taxon>Thermotogota</taxon>
        <taxon>Thermotogae</taxon>
        <taxon>Petrotogales</taxon>
        <taxon>Petrotogaceae</taxon>
        <taxon>Petrotoga</taxon>
    </lineage>
</organism>
<feature type="signal peptide" evidence="1">
    <location>
        <begin position="1"/>
        <end position="22"/>
    </location>
</feature>
<feature type="chain" id="PRO_0000334989" description="Uncharacterized solute-binding protein Pmob_0379">
    <location>
        <begin position="23"/>
        <end position="321"/>
    </location>
</feature>
<proteinExistence type="inferred from homology"/>
<protein>
    <recommendedName>
        <fullName>Uncharacterized solute-binding protein Pmob_0379</fullName>
    </recommendedName>
</protein>
<dbReference type="EMBL" id="CP000879">
    <property type="protein sequence ID" value="ABX31121.1"/>
    <property type="molecule type" value="Genomic_DNA"/>
</dbReference>
<dbReference type="RefSeq" id="WP_012208228.1">
    <property type="nucleotide sequence ID" value="NC_010003.1"/>
</dbReference>
<dbReference type="SMR" id="A9BF57"/>
<dbReference type="STRING" id="403833.Pmob_0379"/>
<dbReference type="KEGG" id="pmo:Pmob_0379"/>
<dbReference type="eggNOG" id="COG0725">
    <property type="taxonomic scope" value="Bacteria"/>
</dbReference>
<dbReference type="HOGENOM" id="CLU_055936_0_0_0"/>
<dbReference type="OrthoDB" id="9785015at2"/>
<dbReference type="Proteomes" id="UP000000789">
    <property type="component" value="Chromosome"/>
</dbReference>
<dbReference type="GO" id="GO:0030973">
    <property type="term" value="F:molybdate ion binding"/>
    <property type="evidence" value="ECO:0007669"/>
    <property type="project" value="TreeGrafter"/>
</dbReference>
<dbReference type="GO" id="GO:1901359">
    <property type="term" value="F:tungstate binding"/>
    <property type="evidence" value="ECO:0007669"/>
    <property type="project" value="InterPro"/>
</dbReference>
<dbReference type="GO" id="GO:0015689">
    <property type="term" value="P:molybdate ion transport"/>
    <property type="evidence" value="ECO:0007669"/>
    <property type="project" value="TreeGrafter"/>
</dbReference>
<dbReference type="CDD" id="cd13540">
    <property type="entry name" value="PBP2_ModA_WtpA"/>
    <property type="match status" value="1"/>
</dbReference>
<dbReference type="Gene3D" id="3.40.190.10">
    <property type="entry name" value="Periplasmic binding protein-like II"/>
    <property type="match status" value="2"/>
</dbReference>
<dbReference type="InterPro" id="IPR022498">
    <property type="entry name" value="ABC_trnspt_W-bd_WtpA"/>
</dbReference>
<dbReference type="InterPro" id="IPR050682">
    <property type="entry name" value="ModA/WtpA"/>
</dbReference>
<dbReference type="NCBIfam" id="NF003196">
    <property type="entry name" value="PRK04168.1"/>
    <property type="match status" value="1"/>
</dbReference>
<dbReference type="NCBIfam" id="TIGR03730">
    <property type="entry name" value="tungstate_WtpA"/>
    <property type="match status" value="1"/>
</dbReference>
<dbReference type="PANTHER" id="PTHR30632">
    <property type="entry name" value="MOLYBDATE-BINDING PERIPLASMIC PROTEIN"/>
    <property type="match status" value="1"/>
</dbReference>
<dbReference type="PANTHER" id="PTHR30632:SF16">
    <property type="entry name" value="MOLYBDATE_TUNGSTATE-BINDING PROTEIN WTPA"/>
    <property type="match status" value="1"/>
</dbReference>
<dbReference type="Pfam" id="PF13531">
    <property type="entry name" value="SBP_bac_11"/>
    <property type="match status" value="1"/>
</dbReference>
<dbReference type="SUPFAM" id="SSF53850">
    <property type="entry name" value="Periplasmic binding protein-like II"/>
    <property type="match status" value="1"/>
</dbReference>